<accession>B8CNQ5</accession>
<proteinExistence type="inferred from homology"/>
<gene>
    <name evidence="1" type="primary">lpxK</name>
    <name type="ordered locus">swp_2278</name>
</gene>
<keyword id="KW-0067">ATP-binding</keyword>
<keyword id="KW-0418">Kinase</keyword>
<keyword id="KW-0441">Lipid A biosynthesis</keyword>
<keyword id="KW-0444">Lipid biosynthesis</keyword>
<keyword id="KW-0443">Lipid metabolism</keyword>
<keyword id="KW-0547">Nucleotide-binding</keyword>
<keyword id="KW-0808">Transferase</keyword>
<comment type="function">
    <text evidence="1">Transfers the gamma-phosphate of ATP to the 4'-position of a tetraacyldisaccharide 1-phosphate intermediate (termed DS-1-P) to form tetraacyldisaccharide 1,4'-bis-phosphate (lipid IVA).</text>
</comment>
<comment type="catalytic activity">
    <reaction evidence="1">
        <text>a lipid A disaccharide + ATP = a lipid IVA + ADP + H(+)</text>
        <dbReference type="Rhea" id="RHEA:67840"/>
        <dbReference type="ChEBI" id="CHEBI:15378"/>
        <dbReference type="ChEBI" id="CHEBI:30616"/>
        <dbReference type="ChEBI" id="CHEBI:176343"/>
        <dbReference type="ChEBI" id="CHEBI:176425"/>
        <dbReference type="ChEBI" id="CHEBI:456216"/>
        <dbReference type="EC" id="2.7.1.130"/>
    </reaction>
</comment>
<comment type="pathway">
    <text evidence="1">Glycolipid biosynthesis; lipid IV(A) biosynthesis; lipid IV(A) from (3R)-3-hydroxytetradecanoyl-[acyl-carrier-protein] and UDP-N-acetyl-alpha-D-glucosamine: step 6/6.</text>
</comment>
<comment type="similarity">
    <text evidence="1">Belongs to the LpxK family.</text>
</comment>
<dbReference type="EC" id="2.7.1.130" evidence="1"/>
<dbReference type="EMBL" id="CP000472">
    <property type="protein sequence ID" value="ACJ29024.1"/>
    <property type="molecule type" value="Genomic_DNA"/>
</dbReference>
<dbReference type="RefSeq" id="WP_020912384.1">
    <property type="nucleotide sequence ID" value="NC_011566.1"/>
</dbReference>
<dbReference type="SMR" id="B8CNQ5"/>
<dbReference type="STRING" id="225849.swp_2278"/>
<dbReference type="KEGG" id="swp:swp_2278"/>
<dbReference type="eggNOG" id="COG1663">
    <property type="taxonomic scope" value="Bacteria"/>
</dbReference>
<dbReference type="HOGENOM" id="CLU_038816_2_0_6"/>
<dbReference type="OrthoDB" id="9766423at2"/>
<dbReference type="UniPathway" id="UPA00359">
    <property type="reaction ID" value="UER00482"/>
</dbReference>
<dbReference type="Proteomes" id="UP000000753">
    <property type="component" value="Chromosome"/>
</dbReference>
<dbReference type="GO" id="GO:0005886">
    <property type="term" value="C:plasma membrane"/>
    <property type="evidence" value="ECO:0007669"/>
    <property type="project" value="TreeGrafter"/>
</dbReference>
<dbReference type="GO" id="GO:0005524">
    <property type="term" value="F:ATP binding"/>
    <property type="evidence" value="ECO:0007669"/>
    <property type="project" value="UniProtKB-UniRule"/>
</dbReference>
<dbReference type="GO" id="GO:0009029">
    <property type="term" value="F:tetraacyldisaccharide 4'-kinase activity"/>
    <property type="evidence" value="ECO:0007669"/>
    <property type="project" value="UniProtKB-UniRule"/>
</dbReference>
<dbReference type="GO" id="GO:0009245">
    <property type="term" value="P:lipid A biosynthetic process"/>
    <property type="evidence" value="ECO:0007669"/>
    <property type="project" value="UniProtKB-UniRule"/>
</dbReference>
<dbReference type="GO" id="GO:0009244">
    <property type="term" value="P:lipopolysaccharide core region biosynthetic process"/>
    <property type="evidence" value="ECO:0007669"/>
    <property type="project" value="TreeGrafter"/>
</dbReference>
<dbReference type="HAMAP" id="MF_00409">
    <property type="entry name" value="LpxK"/>
    <property type="match status" value="1"/>
</dbReference>
<dbReference type="InterPro" id="IPR003758">
    <property type="entry name" value="LpxK"/>
</dbReference>
<dbReference type="InterPro" id="IPR027417">
    <property type="entry name" value="P-loop_NTPase"/>
</dbReference>
<dbReference type="NCBIfam" id="TIGR00682">
    <property type="entry name" value="lpxK"/>
    <property type="match status" value="1"/>
</dbReference>
<dbReference type="PANTHER" id="PTHR42724">
    <property type="entry name" value="TETRAACYLDISACCHARIDE 4'-KINASE"/>
    <property type="match status" value="1"/>
</dbReference>
<dbReference type="PANTHER" id="PTHR42724:SF1">
    <property type="entry name" value="TETRAACYLDISACCHARIDE 4'-KINASE, MITOCHONDRIAL-RELATED"/>
    <property type="match status" value="1"/>
</dbReference>
<dbReference type="Pfam" id="PF02606">
    <property type="entry name" value="LpxK"/>
    <property type="match status" value="1"/>
</dbReference>
<dbReference type="SUPFAM" id="SSF52540">
    <property type="entry name" value="P-loop containing nucleoside triphosphate hydrolases"/>
    <property type="match status" value="1"/>
</dbReference>
<feature type="chain" id="PRO_1000123746" description="Tetraacyldisaccharide 4'-kinase">
    <location>
        <begin position="1"/>
        <end position="332"/>
    </location>
</feature>
<feature type="binding site" evidence="1">
    <location>
        <begin position="58"/>
        <end position="65"/>
    </location>
    <ligand>
        <name>ATP</name>
        <dbReference type="ChEBI" id="CHEBI:30616"/>
    </ligand>
</feature>
<sequence length="332" mass="36785">MQSWVNKLWYDGHVLRFALWPLSLLFAAITWFRRQLYAVGLKPQATFPVPVIIVGNITVGGSGKTPTVIYLIELLRKHGYKPGVISRGYGVQIDGVRSVYPSNNANQVGDEPAMIVARTNIPMVVGAKRIDAAQQLLNDFDVDIIISDDGLQHYALARDIELIILDGERRLGNGMLLPAGPLREGGWRAAAVDHVIVNGGEAQSGEQQMLLQPTLWHSVNGKQSPDTAPEPEQDVVAMAGIGNPSRFFDTLADMGYRLDKVQAFDDHSAYSEATLTALAGELPLLMTEKDAVKCREFAKDNWWYLAVDAKLPHSFDQQLLTRVKQVVEEKQR</sequence>
<organism>
    <name type="scientific">Shewanella piezotolerans (strain WP3 / JCM 13877)</name>
    <dbReference type="NCBI Taxonomy" id="225849"/>
    <lineage>
        <taxon>Bacteria</taxon>
        <taxon>Pseudomonadati</taxon>
        <taxon>Pseudomonadota</taxon>
        <taxon>Gammaproteobacteria</taxon>
        <taxon>Alteromonadales</taxon>
        <taxon>Shewanellaceae</taxon>
        <taxon>Shewanella</taxon>
    </lineage>
</organism>
<reference key="1">
    <citation type="journal article" date="2008" name="PLoS ONE">
        <title>Environmental adaptation: genomic analysis of the piezotolerant and psychrotolerant deep-sea iron reducing bacterium Shewanella piezotolerans WP3.</title>
        <authorList>
            <person name="Wang F."/>
            <person name="Wang J."/>
            <person name="Jian H."/>
            <person name="Zhang B."/>
            <person name="Li S."/>
            <person name="Wang F."/>
            <person name="Zeng X."/>
            <person name="Gao L."/>
            <person name="Bartlett D.H."/>
            <person name="Yu J."/>
            <person name="Hu S."/>
            <person name="Xiao X."/>
        </authorList>
    </citation>
    <scope>NUCLEOTIDE SEQUENCE [LARGE SCALE GENOMIC DNA]</scope>
    <source>
        <strain>WP3 / JCM 13877</strain>
    </source>
</reference>
<name>LPXK_SHEPW</name>
<protein>
    <recommendedName>
        <fullName evidence="1">Tetraacyldisaccharide 4'-kinase</fullName>
        <ecNumber evidence="1">2.7.1.130</ecNumber>
    </recommendedName>
    <alternativeName>
        <fullName evidence="1">Lipid A 4'-kinase</fullName>
    </alternativeName>
</protein>
<evidence type="ECO:0000255" key="1">
    <source>
        <dbReference type="HAMAP-Rule" id="MF_00409"/>
    </source>
</evidence>